<proteinExistence type="inferred from homology"/>
<sequence length="346" mass="37731">MTHRFLEACRKQPVDRLPVWMMRQAGRYQPSYRAVRANVGFLELCRSPELIAQVTVAPIDEFGFDAAILFSDILVHLPAMGLDLSFEKGEKGKGDGGPKIANPVRTRADVDALKVPAPKKDLPYVLDGVRAIRAALRDRVPLIGFVGGPFTVASYAVEGGSQGFTRLKTMLYAEPRTAHALFEKLTQAAIVQIEEQIAAGAQAAQIFESWLGELDRADLEEFAFPYLARIAEAVKRTGVPSIFFSTGTTAHLEPISKLGYDVVSVDWRIPIDEARRRAPGVAIQGNMDSTVLLGPKEVAVERALSIVRAAGREPGYIFNLGHGIQPGTPTETVKAVVDAVHAFAWK</sequence>
<evidence type="ECO:0000255" key="1">
    <source>
        <dbReference type="HAMAP-Rule" id="MF_00218"/>
    </source>
</evidence>
<evidence type="ECO:0000305" key="2"/>
<protein>
    <recommendedName>
        <fullName evidence="1">Uroporphyrinogen decarboxylase</fullName>
        <shortName evidence="1">UPD</shortName>
        <shortName evidence="1">URO-D</shortName>
        <ecNumber evidence="1">4.1.1.37</ecNumber>
    </recommendedName>
</protein>
<dbReference type="EC" id="4.1.1.37" evidence="1"/>
<dbReference type="EMBL" id="CP000769">
    <property type="protein sequence ID" value="ABS25336.1"/>
    <property type="status" value="ALT_INIT"/>
    <property type="molecule type" value="Genomic_DNA"/>
</dbReference>
<dbReference type="RefSeq" id="WP_234945250.1">
    <property type="nucleotide sequence ID" value="NC_009675.1"/>
</dbReference>
<dbReference type="SMR" id="A7H9E0"/>
<dbReference type="STRING" id="404589.Anae109_1128"/>
<dbReference type="KEGG" id="afw:Anae109_1128"/>
<dbReference type="eggNOG" id="COG0407">
    <property type="taxonomic scope" value="Bacteria"/>
</dbReference>
<dbReference type="HOGENOM" id="CLU_040933_0_0_7"/>
<dbReference type="UniPathway" id="UPA00251">
    <property type="reaction ID" value="UER00321"/>
</dbReference>
<dbReference type="Proteomes" id="UP000006382">
    <property type="component" value="Chromosome"/>
</dbReference>
<dbReference type="GO" id="GO:0005829">
    <property type="term" value="C:cytosol"/>
    <property type="evidence" value="ECO:0007669"/>
    <property type="project" value="TreeGrafter"/>
</dbReference>
<dbReference type="GO" id="GO:0004853">
    <property type="term" value="F:uroporphyrinogen decarboxylase activity"/>
    <property type="evidence" value="ECO:0007669"/>
    <property type="project" value="UniProtKB-UniRule"/>
</dbReference>
<dbReference type="GO" id="GO:0006782">
    <property type="term" value="P:protoporphyrinogen IX biosynthetic process"/>
    <property type="evidence" value="ECO:0007669"/>
    <property type="project" value="UniProtKB-UniRule"/>
</dbReference>
<dbReference type="CDD" id="cd00717">
    <property type="entry name" value="URO-D"/>
    <property type="match status" value="1"/>
</dbReference>
<dbReference type="Gene3D" id="3.20.20.210">
    <property type="match status" value="1"/>
</dbReference>
<dbReference type="HAMAP" id="MF_00218">
    <property type="entry name" value="URO_D"/>
    <property type="match status" value="1"/>
</dbReference>
<dbReference type="InterPro" id="IPR038071">
    <property type="entry name" value="UROD/MetE-like_sf"/>
</dbReference>
<dbReference type="InterPro" id="IPR006361">
    <property type="entry name" value="Uroporphyrinogen_deCO2ase_HemE"/>
</dbReference>
<dbReference type="InterPro" id="IPR000257">
    <property type="entry name" value="Uroporphyrinogen_deCOase"/>
</dbReference>
<dbReference type="NCBIfam" id="TIGR01464">
    <property type="entry name" value="hemE"/>
    <property type="match status" value="1"/>
</dbReference>
<dbReference type="PANTHER" id="PTHR21091">
    <property type="entry name" value="METHYLTETRAHYDROFOLATE:HOMOCYSTEINE METHYLTRANSFERASE RELATED"/>
    <property type="match status" value="1"/>
</dbReference>
<dbReference type="PANTHER" id="PTHR21091:SF169">
    <property type="entry name" value="UROPORPHYRINOGEN DECARBOXYLASE"/>
    <property type="match status" value="1"/>
</dbReference>
<dbReference type="Pfam" id="PF01208">
    <property type="entry name" value="URO-D"/>
    <property type="match status" value="1"/>
</dbReference>
<dbReference type="SUPFAM" id="SSF51726">
    <property type="entry name" value="UROD/MetE-like"/>
    <property type="match status" value="1"/>
</dbReference>
<dbReference type="PROSITE" id="PS00906">
    <property type="entry name" value="UROD_1"/>
    <property type="match status" value="1"/>
</dbReference>
<dbReference type="PROSITE" id="PS00907">
    <property type="entry name" value="UROD_2"/>
    <property type="match status" value="1"/>
</dbReference>
<organism>
    <name type="scientific">Anaeromyxobacter sp. (strain Fw109-5)</name>
    <dbReference type="NCBI Taxonomy" id="404589"/>
    <lineage>
        <taxon>Bacteria</taxon>
        <taxon>Pseudomonadati</taxon>
        <taxon>Myxococcota</taxon>
        <taxon>Myxococcia</taxon>
        <taxon>Myxococcales</taxon>
        <taxon>Cystobacterineae</taxon>
        <taxon>Anaeromyxobacteraceae</taxon>
        <taxon>Anaeromyxobacter</taxon>
    </lineage>
</organism>
<keyword id="KW-0963">Cytoplasm</keyword>
<keyword id="KW-0210">Decarboxylase</keyword>
<keyword id="KW-0456">Lyase</keyword>
<keyword id="KW-0627">Porphyrin biosynthesis</keyword>
<keyword id="KW-1185">Reference proteome</keyword>
<reference key="1">
    <citation type="journal article" date="2015" name="Genome Announc.">
        <title>Complete genome sequence of Anaeromyxobacter sp. Fw109-5, an anaerobic, metal-reducing bacterium isolated from a contaminated subsurface environment.</title>
        <authorList>
            <person name="Hwang C."/>
            <person name="Copeland A."/>
            <person name="Lucas S."/>
            <person name="Lapidus A."/>
            <person name="Barry K."/>
            <person name="Glavina Del Rio T."/>
            <person name="Dalin E."/>
            <person name="Tice H."/>
            <person name="Pitluck S."/>
            <person name="Sims D."/>
            <person name="Brettin T."/>
            <person name="Bruce D.C."/>
            <person name="Detter J.C."/>
            <person name="Han C.S."/>
            <person name="Schmutz J."/>
            <person name="Larimer F.W."/>
            <person name="Land M.L."/>
            <person name="Hauser L.J."/>
            <person name="Kyrpides N."/>
            <person name="Lykidis A."/>
            <person name="Richardson P."/>
            <person name="Belieav A."/>
            <person name="Sanford R.A."/>
            <person name="Loeffler F.E."/>
            <person name="Fields M.W."/>
        </authorList>
    </citation>
    <scope>NUCLEOTIDE SEQUENCE [LARGE SCALE GENOMIC DNA]</scope>
    <source>
        <strain>Fw109-5</strain>
    </source>
</reference>
<gene>
    <name evidence="1" type="primary">hemE</name>
    <name type="ordered locus">Anae109_1128</name>
</gene>
<comment type="function">
    <text evidence="1">Catalyzes the decarboxylation of four acetate groups of uroporphyrinogen-III to yield coproporphyrinogen-III.</text>
</comment>
<comment type="catalytic activity">
    <reaction evidence="1">
        <text>uroporphyrinogen III + 4 H(+) = coproporphyrinogen III + 4 CO2</text>
        <dbReference type="Rhea" id="RHEA:19865"/>
        <dbReference type="ChEBI" id="CHEBI:15378"/>
        <dbReference type="ChEBI" id="CHEBI:16526"/>
        <dbReference type="ChEBI" id="CHEBI:57308"/>
        <dbReference type="ChEBI" id="CHEBI:57309"/>
        <dbReference type="EC" id="4.1.1.37"/>
    </reaction>
</comment>
<comment type="pathway">
    <text evidence="1">Porphyrin-containing compound metabolism; protoporphyrin-IX biosynthesis; coproporphyrinogen-III from 5-aminolevulinate: step 4/4.</text>
</comment>
<comment type="subunit">
    <text evidence="1">Homodimer.</text>
</comment>
<comment type="subcellular location">
    <subcellularLocation>
        <location evidence="1">Cytoplasm</location>
    </subcellularLocation>
</comment>
<comment type="similarity">
    <text evidence="1">Belongs to the uroporphyrinogen decarboxylase family.</text>
</comment>
<comment type="sequence caution" evidence="2">
    <conflict type="erroneous initiation">
        <sequence resource="EMBL-CDS" id="ABS25336"/>
    </conflict>
</comment>
<name>DCUP_ANADF</name>
<accession>A7H9E0</accession>
<feature type="chain" id="PRO_0000325622" description="Uroporphyrinogen decarboxylase">
    <location>
        <begin position="1"/>
        <end position="346"/>
    </location>
</feature>
<feature type="binding site" evidence="1">
    <location>
        <begin position="23"/>
        <end position="27"/>
    </location>
    <ligand>
        <name>substrate</name>
    </ligand>
</feature>
<feature type="binding site" evidence="1">
    <location>
        <position position="72"/>
    </location>
    <ligand>
        <name>substrate</name>
    </ligand>
</feature>
<feature type="binding site" evidence="1">
    <location>
        <position position="155"/>
    </location>
    <ligand>
        <name>substrate</name>
    </ligand>
</feature>
<feature type="binding site" evidence="1">
    <location>
        <position position="209"/>
    </location>
    <ligand>
        <name>substrate</name>
    </ligand>
</feature>
<feature type="binding site" evidence="1">
    <location>
        <position position="322"/>
    </location>
    <ligand>
        <name>substrate</name>
    </ligand>
</feature>
<feature type="site" description="Transition state stabilizer" evidence="1">
    <location>
        <position position="72"/>
    </location>
</feature>